<keyword id="KW-0270">Exopolysaccharide synthesis</keyword>
<keyword id="KW-0614">Plasmid</keyword>
<keyword id="KW-1185">Reference proteome</keyword>
<gene>
    <name type="primary">syrA</name>
    <name type="ordered locus">RA0457</name>
    <name type="ORF">SMa0838</name>
</gene>
<comment type="function">
    <text>Increases exopolysaccharide abundance.</text>
</comment>
<dbReference type="EMBL" id="U90221">
    <property type="protein sequence ID" value="AAC61831.2"/>
    <property type="molecule type" value="Genomic_DNA"/>
</dbReference>
<dbReference type="EMBL" id="AE006469">
    <property type="protein sequence ID" value="AAK65115.1"/>
    <property type="molecule type" value="Genomic_DNA"/>
</dbReference>
<dbReference type="PIR" id="A95319">
    <property type="entry name" value="A95319"/>
</dbReference>
<dbReference type="RefSeq" id="NP_435703.1">
    <property type="nucleotide sequence ID" value="NC_003037.1"/>
</dbReference>
<dbReference type="RefSeq" id="WP_003532793.1">
    <property type="nucleotide sequence ID" value="NC_003037.1"/>
</dbReference>
<dbReference type="SMR" id="O87908"/>
<dbReference type="EnsemblBacteria" id="AAK65115">
    <property type="protein sequence ID" value="AAK65115"/>
    <property type="gene ID" value="SMa0838"/>
</dbReference>
<dbReference type="GeneID" id="89573876"/>
<dbReference type="KEGG" id="sme:SMa0838"/>
<dbReference type="HOGENOM" id="CLU_2571456_0_0_5"/>
<dbReference type="OrthoDB" id="9802759at2"/>
<dbReference type="PRO" id="PR:O87908"/>
<dbReference type="Proteomes" id="UP000001976">
    <property type="component" value="Plasmid pSymA"/>
</dbReference>
<dbReference type="GO" id="GO:0000271">
    <property type="term" value="P:polysaccharide biosynthetic process"/>
    <property type="evidence" value="ECO:0007669"/>
    <property type="project" value="UniProtKB-KW"/>
</dbReference>
<dbReference type="InterPro" id="IPR024239">
    <property type="entry name" value="SyrA"/>
</dbReference>
<dbReference type="Pfam" id="PF11089">
    <property type="entry name" value="SyrA"/>
    <property type="match status" value="1"/>
</dbReference>
<accession>O87908</accession>
<sequence length="81" mass="9003">MSFRFVCLILWLLLCASSLAIYFALQPCPGFIVTTLACLLLFQLAYFGSVLLLVCLAAIAQLSARLRIFGIFSENRNHSSK</sequence>
<proteinExistence type="predicted"/>
<name>SYRA_RHIME</name>
<feature type="chain" id="PRO_0000072391" description="Protein SyrA">
    <location>
        <begin position="1"/>
        <end position="81"/>
    </location>
</feature>
<organism>
    <name type="scientific">Rhizobium meliloti (strain 1021)</name>
    <name type="common">Ensifer meliloti</name>
    <name type="synonym">Sinorhizobium meliloti</name>
    <dbReference type="NCBI Taxonomy" id="266834"/>
    <lineage>
        <taxon>Bacteria</taxon>
        <taxon>Pseudomonadati</taxon>
        <taxon>Pseudomonadota</taxon>
        <taxon>Alphaproteobacteria</taxon>
        <taxon>Hyphomicrobiales</taxon>
        <taxon>Rhizobiaceae</taxon>
        <taxon>Sinorhizobium/Ensifer group</taxon>
        <taxon>Sinorhizobium</taxon>
    </lineage>
</organism>
<geneLocation type="plasmid">
    <name>pSymA</name>
    <name>megaplasmid 1</name>
</geneLocation>
<reference key="1">
    <citation type="journal article" date="1998" name="Genetics">
        <title>Multiple genetic controls on Rhizobium meliloti syrA, a regulator of exopolysaccharide abundance.</title>
        <authorList>
            <person name="Barnett M.J."/>
            <person name="Swanson J.A."/>
            <person name="Long S.R."/>
        </authorList>
    </citation>
    <scope>NUCLEOTIDE SEQUENCE [GENOMIC DNA]</scope>
    <source>
        <strain>1021</strain>
    </source>
</reference>
<reference key="2">
    <citation type="journal article" date="2001" name="Proc. Natl. Acad. Sci. U.S.A.">
        <title>Nucleotide sequence and predicted functions of the entire Sinorhizobium meliloti pSymA megaplasmid.</title>
        <authorList>
            <person name="Barnett M.J."/>
            <person name="Fisher R.F."/>
            <person name="Jones T."/>
            <person name="Komp C."/>
            <person name="Abola A.P."/>
            <person name="Barloy-Hubler F."/>
            <person name="Bowser L."/>
            <person name="Capela D."/>
            <person name="Galibert F."/>
            <person name="Gouzy J."/>
            <person name="Gurjal M."/>
            <person name="Hong A."/>
            <person name="Huizar L."/>
            <person name="Hyman R.W."/>
            <person name="Kahn D."/>
            <person name="Kahn M.L."/>
            <person name="Kalman S."/>
            <person name="Keating D.H."/>
            <person name="Palm C."/>
            <person name="Peck M.C."/>
            <person name="Surzycki R."/>
            <person name="Wells D.H."/>
            <person name="Yeh K.-C."/>
            <person name="Davis R.W."/>
            <person name="Federspiel N.A."/>
            <person name="Long S.R."/>
        </authorList>
    </citation>
    <scope>NUCLEOTIDE SEQUENCE [LARGE SCALE GENOMIC DNA]</scope>
    <source>
        <strain>1021</strain>
    </source>
</reference>
<reference key="3">
    <citation type="journal article" date="2001" name="Science">
        <title>The composite genome of the legume symbiont Sinorhizobium meliloti.</title>
        <authorList>
            <person name="Galibert F."/>
            <person name="Finan T.M."/>
            <person name="Long S.R."/>
            <person name="Puehler A."/>
            <person name="Abola P."/>
            <person name="Ampe F."/>
            <person name="Barloy-Hubler F."/>
            <person name="Barnett M.J."/>
            <person name="Becker A."/>
            <person name="Boistard P."/>
            <person name="Bothe G."/>
            <person name="Boutry M."/>
            <person name="Bowser L."/>
            <person name="Buhrmester J."/>
            <person name="Cadieu E."/>
            <person name="Capela D."/>
            <person name="Chain P."/>
            <person name="Cowie A."/>
            <person name="Davis R.W."/>
            <person name="Dreano S."/>
            <person name="Federspiel N.A."/>
            <person name="Fisher R.F."/>
            <person name="Gloux S."/>
            <person name="Godrie T."/>
            <person name="Goffeau A."/>
            <person name="Golding B."/>
            <person name="Gouzy J."/>
            <person name="Gurjal M."/>
            <person name="Hernandez-Lucas I."/>
            <person name="Hong A."/>
            <person name="Huizar L."/>
            <person name="Hyman R.W."/>
            <person name="Jones T."/>
            <person name="Kahn D."/>
            <person name="Kahn M.L."/>
            <person name="Kalman S."/>
            <person name="Keating D.H."/>
            <person name="Kiss E."/>
            <person name="Komp C."/>
            <person name="Lelaure V."/>
            <person name="Masuy D."/>
            <person name="Palm C."/>
            <person name="Peck M.C."/>
            <person name="Pohl T.M."/>
            <person name="Portetelle D."/>
            <person name="Purnelle B."/>
            <person name="Ramsperger U."/>
            <person name="Surzycki R."/>
            <person name="Thebault P."/>
            <person name="Vandenbol M."/>
            <person name="Vorhoelter F.J."/>
            <person name="Weidner S."/>
            <person name="Wells D.H."/>
            <person name="Wong K."/>
            <person name="Yeh K.-C."/>
            <person name="Batut J."/>
        </authorList>
    </citation>
    <scope>NUCLEOTIDE SEQUENCE [LARGE SCALE GENOMIC DNA]</scope>
    <source>
        <strain>1021</strain>
    </source>
</reference>
<protein>
    <recommendedName>
        <fullName>Protein SyrA</fullName>
    </recommendedName>
</protein>